<feature type="peptide" id="PRO_0000044644" description="Brevinin-2Eb" evidence="1">
    <location>
        <begin position="1"/>
        <end position="33"/>
    </location>
</feature>
<feature type="disulfide bond" evidence="1">
    <location>
        <begin position="27"/>
        <end position="33"/>
    </location>
</feature>
<accession>P40838</accession>
<sequence>GILDTLKNLAKTAGKGALQGLVKMASCKLSGQC</sequence>
<proteinExistence type="evidence at protein level"/>
<protein>
    <recommendedName>
        <fullName evidence="2">Brevinin-2Eb</fullName>
    </recommendedName>
</protein>
<organism>
    <name type="scientific">Pelophylax lessonae</name>
    <name type="common">Pool frog</name>
    <name type="synonym">Rana lessonae</name>
    <dbReference type="NCBI Taxonomy" id="45623"/>
    <lineage>
        <taxon>Eukaryota</taxon>
        <taxon>Metazoa</taxon>
        <taxon>Chordata</taxon>
        <taxon>Craniata</taxon>
        <taxon>Vertebrata</taxon>
        <taxon>Euteleostomi</taxon>
        <taxon>Amphibia</taxon>
        <taxon>Batrachia</taxon>
        <taxon>Anura</taxon>
        <taxon>Neobatrachia</taxon>
        <taxon>Ranoidea</taxon>
        <taxon>Ranidae</taxon>
        <taxon>Pelophylax</taxon>
    </lineage>
</organism>
<name>BR2B_PELLE</name>
<reference key="1">
    <citation type="journal article" date="1994" name="J. Biol. Chem.">
        <title>Antimicrobial peptides from skin secretions of Rana esculenta. Molecular cloning of cDNAs encoding esculentin and brevinins and isolation of new active peptides.</title>
        <authorList>
            <person name="Simmaco M."/>
            <person name="Mignogna G."/>
            <person name="Barra D."/>
            <person name="Bossa F."/>
        </authorList>
    </citation>
    <scope>PROTEIN SEQUENCE</scope>
    <scope>DISULFIDE BOND</scope>
    <scope>SUBCELLULAR LOCATION</scope>
    <source>
        <tissue>Skin secretion</tissue>
    </source>
</reference>
<dbReference type="PIR" id="B55998">
    <property type="entry name" value="B55998"/>
</dbReference>
<dbReference type="SMR" id="P40838"/>
<dbReference type="GO" id="GO:0005576">
    <property type="term" value="C:extracellular region"/>
    <property type="evidence" value="ECO:0007669"/>
    <property type="project" value="UniProtKB-SubCell"/>
</dbReference>
<dbReference type="GO" id="GO:0042742">
    <property type="term" value="P:defense response to bacterium"/>
    <property type="evidence" value="ECO:0007669"/>
    <property type="project" value="UniProtKB-KW"/>
</dbReference>
<dbReference type="GO" id="GO:0031640">
    <property type="term" value="P:killing of cells of another organism"/>
    <property type="evidence" value="ECO:0007669"/>
    <property type="project" value="UniProtKB-KW"/>
</dbReference>
<dbReference type="InterPro" id="IPR012521">
    <property type="entry name" value="Antimicrobial_frog_2"/>
</dbReference>
<dbReference type="Pfam" id="PF08023">
    <property type="entry name" value="Antimicrobial_2"/>
    <property type="match status" value="1"/>
</dbReference>
<keyword id="KW-0878">Amphibian defense peptide</keyword>
<keyword id="KW-0044">Antibiotic</keyword>
<keyword id="KW-0929">Antimicrobial</keyword>
<keyword id="KW-0204">Cytolysis</keyword>
<keyword id="KW-0903">Direct protein sequencing</keyword>
<keyword id="KW-1015">Disulfide bond</keyword>
<keyword id="KW-0354">Hemolysis</keyword>
<keyword id="KW-0964">Secreted</keyword>
<evidence type="ECO:0000269" key="1">
    <source>
    </source>
</evidence>
<evidence type="ECO:0000303" key="2">
    <source>
    </source>
</evidence>
<evidence type="ECO:0000305" key="3"/>
<evidence type="ECO:0000305" key="4">
    <source>
    </source>
</evidence>
<comment type="function">
    <text>Shows antibacterial activity against representative Gram-negative and Gram-positive bacterial species, and hemolytic activity.</text>
</comment>
<comment type="subcellular location">
    <subcellularLocation>
        <location evidence="1">Secreted</location>
    </subcellularLocation>
</comment>
<comment type="tissue specificity">
    <text evidence="4">Expressed by the skin glands.</text>
</comment>
<comment type="similarity">
    <text evidence="3">Belongs to the frog skin active peptide (FSAP) family. Brevinin subfamily.</text>
</comment>
<comment type="online information" name="The antimicrobial peptide database">
    <link uri="https://wangapd3.com/database/query_output.php?ID=00077"/>
</comment>